<reference key="1">
    <citation type="journal article" date="2000" name="Nature">
        <title>Sequence and analysis of chromosome 1 of the plant Arabidopsis thaliana.</title>
        <authorList>
            <person name="Theologis A."/>
            <person name="Ecker J.R."/>
            <person name="Palm C.J."/>
            <person name="Federspiel N.A."/>
            <person name="Kaul S."/>
            <person name="White O."/>
            <person name="Alonso J."/>
            <person name="Altafi H."/>
            <person name="Araujo R."/>
            <person name="Bowman C.L."/>
            <person name="Brooks S.Y."/>
            <person name="Buehler E."/>
            <person name="Chan A."/>
            <person name="Chao Q."/>
            <person name="Chen H."/>
            <person name="Cheuk R.F."/>
            <person name="Chin C.W."/>
            <person name="Chung M.K."/>
            <person name="Conn L."/>
            <person name="Conway A.B."/>
            <person name="Conway A.R."/>
            <person name="Creasy T.H."/>
            <person name="Dewar K."/>
            <person name="Dunn P."/>
            <person name="Etgu P."/>
            <person name="Feldblyum T.V."/>
            <person name="Feng J.-D."/>
            <person name="Fong B."/>
            <person name="Fujii C.Y."/>
            <person name="Gill J.E."/>
            <person name="Goldsmith A.D."/>
            <person name="Haas B."/>
            <person name="Hansen N.F."/>
            <person name="Hughes B."/>
            <person name="Huizar L."/>
            <person name="Hunter J.L."/>
            <person name="Jenkins J."/>
            <person name="Johnson-Hopson C."/>
            <person name="Khan S."/>
            <person name="Khaykin E."/>
            <person name="Kim C.J."/>
            <person name="Koo H.L."/>
            <person name="Kremenetskaia I."/>
            <person name="Kurtz D.B."/>
            <person name="Kwan A."/>
            <person name="Lam B."/>
            <person name="Langin-Hooper S."/>
            <person name="Lee A."/>
            <person name="Lee J.M."/>
            <person name="Lenz C.A."/>
            <person name="Li J.H."/>
            <person name="Li Y.-P."/>
            <person name="Lin X."/>
            <person name="Liu S.X."/>
            <person name="Liu Z.A."/>
            <person name="Luros J.S."/>
            <person name="Maiti R."/>
            <person name="Marziali A."/>
            <person name="Militscher J."/>
            <person name="Miranda M."/>
            <person name="Nguyen M."/>
            <person name="Nierman W.C."/>
            <person name="Osborne B.I."/>
            <person name="Pai G."/>
            <person name="Peterson J."/>
            <person name="Pham P.K."/>
            <person name="Rizzo M."/>
            <person name="Rooney T."/>
            <person name="Rowley D."/>
            <person name="Sakano H."/>
            <person name="Salzberg S.L."/>
            <person name="Schwartz J.R."/>
            <person name="Shinn P."/>
            <person name="Southwick A.M."/>
            <person name="Sun H."/>
            <person name="Tallon L.J."/>
            <person name="Tambunga G."/>
            <person name="Toriumi M.J."/>
            <person name="Town C.D."/>
            <person name="Utterback T."/>
            <person name="Van Aken S."/>
            <person name="Vaysberg M."/>
            <person name="Vysotskaia V.S."/>
            <person name="Walker M."/>
            <person name="Wu D."/>
            <person name="Yu G."/>
            <person name="Fraser C.M."/>
            <person name="Venter J.C."/>
            <person name="Davis R.W."/>
        </authorList>
    </citation>
    <scope>NUCLEOTIDE SEQUENCE [LARGE SCALE GENOMIC DNA]</scope>
    <source>
        <strain>cv. Columbia</strain>
    </source>
</reference>
<reference key="2">
    <citation type="journal article" date="2017" name="Plant J.">
        <title>Araport11: a complete reannotation of the Arabidopsis thaliana reference genome.</title>
        <authorList>
            <person name="Cheng C.Y."/>
            <person name="Krishnakumar V."/>
            <person name="Chan A.P."/>
            <person name="Thibaud-Nissen F."/>
            <person name="Schobel S."/>
            <person name="Town C.D."/>
        </authorList>
    </citation>
    <scope>GENOME REANNOTATION</scope>
    <source>
        <strain>cv. Columbia</strain>
    </source>
</reference>
<reference key="3">
    <citation type="journal article" date="2003" name="Science">
        <title>Empirical analysis of transcriptional activity in the Arabidopsis genome.</title>
        <authorList>
            <person name="Yamada K."/>
            <person name="Lim J."/>
            <person name="Dale J.M."/>
            <person name="Chen H."/>
            <person name="Shinn P."/>
            <person name="Palm C.J."/>
            <person name="Southwick A.M."/>
            <person name="Wu H.C."/>
            <person name="Kim C.J."/>
            <person name="Nguyen M."/>
            <person name="Pham P.K."/>
            <person name="Cheuk R.F."/>
            <person name="Karlin-Newmann G."/>
            <person name="Liu S.X."/>
            <person name="Lam B."/>
            <person name="Sakano H."/>
            <person name="Wu T."/>
            <person name="Yu G."/>
            <person name="Miranda M."/>
            <person name="Quach H.L."/>
            <person name="Tripp M."/>
            <person name="Chang C.H."/>
            <person name="Lee J.M."/>
            <person name="Toriumi M.J."/>
            <person name="Chan M.M."/>
            <person name="Tang C.C."/>
            <person name="Onodera C.S."/>
            <person name="Deng J.M."/>
            <person name="Akiyama K."/>
            <person name="Ansari Y."/>
            <person name="Arakawa T."/>
            <person name="Banh J."/>
            <person name="Banno F."/>
            <person name="Bowser L."/>
            <person name="Brooks S.Y."/>
            <person name="Carninci P."/>
            <person name="Chao Q."/>
            <person name="Choy N."/>
            <person name="Enju A."/>
            <person name="Goldsmith A.D."/>
            <person name="Gurjal M."/>
            <person name="Hansen N.F."/>
            <person name="Hayashizaki Y."/>
            <person name="Johnson-Hopson C."/>
            <person name="Hsuan V.W."/>
            <person name="Iida K."/>
            <person name="Karnes M."/>
            <person name="Khan S."/>
            <person name="Koesema E."/>
            <person name="Ishida J."/>
            <person name="Jiang P.X."/>
            <person name="Jones T."/>
            <person name="Kawai J."/>
            <person name="Kamiya A."/>
            <person name="Meyers C."/>
            <person name="Nakajima M."/>
            <person name="Narusaka M."/>
            <person name="Seki M."/>
            <person name="Sakurai T."/>
            <person name="Satou M."/>
            <person name="Tamse R."/>
            <person name="Vaysberg M."/>
            <person name="Wallender E.K."/>
            <person name="Wong C."/>
            <person name="Yamamura Y."/>
            <person name="Yuan S."/>
            <person name="Shinozaki K."/>
            <person name="Davis R.W."/>
            <person name="Theologis A."/>
            <person name="Ecker J.R."/>
        </authorList>
    </citation>
    <scope>NUCLEOTIDE SEQUENCE [LARGE SCALE MRNA] (ISOFORM 1)</scope>
    <source>
        <strain>cv. Columbia</strain>
    </source>
</reference>
<reference key="4">
    <citation type="journal article" date="2011" name="Plant Cell">
        <title>Multilevel control of Arabidopsis 3-hydroxy-3-methylglutaryl coenzyme A reductase by protein phosphatase 2A.</title>
        <authorList>
            <person name="Leivar P."/>
            <person name="Antolin-Llovera M."/>
            <person name="Ferrero S."/>
            <person name="Closa M."/>
            <person name="Arro M."/>
            <person name="Ferrer A."/>
            <person name="Boronat A."/>
            <person name="Campos N."/>
        </authorList>
    </citation>
    <scope>GENE FAMILY</scope>
    <scope>NOMENCLATURE</scope>
</reference>
<dbReference type="EMBL" id="AC003027">
    <property type="protein sequence ID" value="AAD10674.1"/>
    <property type="status" value="ALT_SEQ"/>
    <property type="molecule type" value="Genomic_DNA"/>
</dbReference>
<dbReference type="EMBL" id="CP002684">
    <property type="protein sequence ID" value="AEE27638.1"/>
    <property type="molecule type" value="Genomic_DNA"/>
</dbReference>
<dbReference type="EMBL" id="CP002684">
    <property type="protein sequence ID" value="AEE27639.1"/>
    <property type="molecule type" value="Genomic_DNA"/>
</dbReference>
<dbReference type="EMBL" id="CP002684">
    <property type="protein sequence ID" value="ANM57805.1"/>
    <property type="molecule type" value="Genomic_DNA"/>
</dbReference>
<dbReference type="EMBL" id="CP002684">
    <property type="protein sequence ID" value="ANM57808.1"/>
    <property type="molecule type" value="Genomic_DNA"/>
</dbReference>
<dbReference type="EMBL" id="BT004045">
    <property type="protein sequence ID" value="AAO42077.1"/>
    <property type="molecule type" value="mRNA"/>
</dbReference>
<dbReference type="EMBL" id="BT004945">
    <property type="protein sequence ID" value="AAO50478.1"/>
    <property type="molecule type" value="mRNA"/>
</dbReference>
<dbReference type="PIR" id="E86170">
    <property type="entry name" value="E86170"/>
</dbReference>
<dbReference type="RefSeq" id="NP_001320288.1">
    <molecule id="Q84JI6-2"/>
    <property type="nucleotide sequence ID" value="NM_001331448.1"/>
</dbReference>
<dbReference type="RefSeq" id="NP_001320291.1">
    <molecule id="Q84JI6-2"/>
    <property type="nucleotide sequence ID" value="NM_001331449.1"/>
</dbReference>
<dbReference type="RefSeq" id="NP_171892.2">
    <molecule id="Q84JI6-1"/>
    <property type="nucleotide sequence ID" value="NM_100277.5"/>
</dbReference>
<dbReference type="RefSeq" id="NP_973757.1">
    <molecule id="Q84JI6-2"/>
    <property type="nucleotide sequence ID" value="NM_202028.3"/>
</dbReference>
<dbReference type="SMR" id="Q84JI6"/>
<dbReference type="BioGRID" id="24596">
    <property type="interactions" value="5"/>
</dbReference>
<dbReference type="FunCoup" id="Q84JI6">
    <property type="interactions" value="1592"/>
</dbReference>
<dbReference type="STRING" id="3702.Q84JI6"/>
<dbReference type="iPTMnet" id="Q84JI6"/>
<dbReference type="PaxDb" id="3702-AT1G03960.1"/>
<dbReference type="EnsemblPlants" id="AT1G03960.1">
    <molecule id="Q84JI6-1"/>
    <property type="protein sequence ID" value="AT1G03960.1"/>
    <property type="gene ID" value="AT1G03960"/>
</dbReference>
<dbReference type="EnsemblPlants" id="AT1G03960.2">
    <molecule id="Q84JI6-2"/>
    <property type="protein sequence ID" value="AT1G03960.2"/>
    <property type="gene ID" value="AT1G03960"/>
</dbReference>
<dbReference type="EnsemblPlants" id="AT1G03960.3">
    <molecule id="Q84JI6-2"/>
    <property type="protein sequence ID" value="AT1G03960.3"/>
    <property type="gene ID" value="AT1G03960"/>
</dbReference>
<dbReference type="EnsemblPlants" id="AT1G03960.4">
    <molecule id="Q84JI6-2"/>
    <property type="protein sequence ID" value="AT1G03960.4"/>
    <property type="gene ID" value="AT1G03960"/>
</dbReference>
<dbReference type="GeneID" id="839361"/>
<dbReference type="Gramene" id="AT1G03960.1">
    <molecule id="Q84JI6-1"/>
    <property type="protein sequence ID" value="AT1G03960.1"/>
    <property type="gene ID" value="AT1G03960"/>
</dbReference>
<dbReference type="Gramene" id="AT1G03960.2">
    <molecule id="Q84JI6-2"/>
    <property type="protein sequence ID" value="AT1G03960.2"/>
    <property type="gene ID" value="AT1G03960"/>
</dbReference>
<dbReference type="Gramene" id="AT1G03960.3">
    <molecule id="Q84JI6-2"/>
    <property type="protein sequence ID" value="AT1G03960.3"/>
    <property type="gene ID" value="AT1G03960"/>
</dbReference>
<dbReference type="Gramene" id="AT1G03960.4">
    <molecule id="Q84JI6-2"/>
    <property type="protein sequence ID" value="AT1G03960.4"/>
    <property type="gene ID" value="AT1G03960"/>
</dbReference>
<dbReference type="KEGG" id="ath:AT1G03960"/>
<dbReference type="Araport" id="AT1G03960"/>
<dbReference type="TAIR" id="AT1G03960"/>
<dbReference type="eggNOG" id="KOG2562">
    <property type="taxonomic scope" value="Eukaryota"/>
</dbReference>
<dbReference type="HOGENOM" id="CLU_019589_3_0_1"/>
<dbReference type="InParanoid" id="Q84JI6"/>
<dbReference type="OMA" id="IAHEQHE"/>
<dbReference type="PhylomeDB" id="Q84JI6"/>
<dbReference type="PRO" id="PR:Q84JI6"/>
<dbReference type="Proteomes" id="UP000006548">
    <property type="component" value="Chromosome 1"/>
</dbReference>
<dbReference type="ExpressionAtlas" id="Q84JI6">
    <property type="expression patterns" value="baseline and differential"/>
</dbReference>
<dbReference type="GO" id="GO:0005509">
    <property type="term" value="F:calcium ion binding"/>
    <property type="evidence" value="ECO:0007669"/>
    <property type="project" value="InterPro"/>
</dbReference>
<dbReference type="CDD" id="cd21504">
    <property type="entry name" value="PPP2R3A_B-like"/>
    <property type="match status" value="1"/>
</dbReference>
<dbReference type="FunFam" id="1.10.238.220:FF:000003">
    <property type="entry name" value="Phosphoprotein phosphatase 2A regulatory subunit"/>
    <property type="match status" value="1"/>
</dbReference>
<dbReference type="FunFam" id="1.10.238.230:FF:000002">
    <property type="entry name" value="Serine/threonine protein phosphatase 2A regulatory subunit B''alpha"/>
    <property type="match status" value="1"/>
</dbReference>
<dbReference type="FunFam" id="1.10.238.10:FF:000025">
    <property type="entry name" value="serine/threonine-protein phosphatase 2A regulatory subunit B'' subunit alpha"/>
    <property type="match status" value="1"/>
</dbReference>
<dbReference type="Gene3D" id="1.10.238.220">
    <property type="match status" value="1"/>
</dbReference>
<dbReference type="Gene3D" id="1.10.238.230">
    <property type="match status" value="1"/>
</dbReference>
<dbReference type="Gene3D" id="1.10.238.10">
    <property type="entry name" value="EF-hand"/>
    <property type="match status" value="1"/>
</dbReference>
<dbReference type="InterPro" id="IPR011992">
    <property type="entry name" value="EF-hand-dom_pair"/>
</dbReference>
<dbReference type="InterPro" id="IPR041534">
    <property type="entry name" value="EF-hand_13"/>
</dbReference>
<dbReference type="InterPro" id="IPR018247">
    <property type="entry name" value="EF_Hand_1_Ca_BS"/>
</dbReference>
<dbReference type="InterPro" id="IPR002048">
    <property type="entry name" value="EF_hand_dom"/>
</dbReference>
<dbReference type="PANTHER" id="PTHR14095">
    <property type="entry name" value="PHOSPHATASE 2A REGULATORY SUBUNIT-RELATED"/>
    <property type="match status" value="1"/>
</dbReference>
<dbReference type="PANTHER" id="PTHR14095:SF24">
    <property type="entry name" value="SERINE_THREONINE PROTEIN PHOSPHATASE 2A REGULATORY SUBUNIT B''EPSILON-RELATED"/>
    <property type="match status" value="1"/>
</dbReference>
<dbReference type="Pfam" id="PF17958">
    <property type="entry name" value="EF-hand_13"/>
    <property type="match status" value="1"/>
</dbReference>
<dbReference type="SUPFAM" id="SSF47473">
    <property type="entry name" value="EF-hand"/>
    <property type="match status" value="2"/>
</dbReference>
<dbReference type="PROSITE" id="PS00018">
    <property type="entry name" value="EF_HAND_1"/>
    <property type="match status" value="1"/>
</dbReference>
<dbReference type="PROSITE" id="PS50222">
    <property type="entry name" value="EF_HAND_2"/>
    <property type="match status" value="1"/>
</dbReference>
<evidence type="ECO:0000250" key="1"/>
<evidence type="ECO:0000255" key="2">
    <source>
        <dbReference type="PROSITE-ProRule" id="PRU00448"/>
    </source>
</evidence>
<evidence type="ECO:0000256" key="3">
    <source>
        <dbReference type="SAM" id="MobiDB-lite"/>
    </source>
</evidence>
<evidence type="ECO:0000305" key="4"/>
<organism>
    <name type="scientific">Arabidopsis thaliana</name>
    <name type="common">Mouse-ear cress</name>
    <dbReference type="NCBI Taxonomy" id="3702"/>
    <lineage>
        <taxon>Eukaryota</taxon>
        <taxon>Viridiplantae</taxon>
        <taxon>Streptophyta</taxon>
        <taxon>Embryophyta</taxon>
        <taxon>Tracheophyta</taxon>
        <taxon>Spermatophyta</taxon>
        <taxon>Magnoliopsida</taxon>
        <taxon>eudicotyledons</taxon>
        <taxon>Gunneridae</taxon>
        <taxon>Pentapetalae</taxon>
        <taxon>rosids</taxon>
        <taxon>malvids</taxon>
        <taxon>Brassicales</taxon>
        <taxon>Brassicaceae</taxon>
        <taxon>Camelineae</taxon>
        <taxon>Arabidopsis</taxon>
    </lineage>
</organism>
<feature type="chain" id="PRO_0000422791" description="Probable serine/threonine protein phosphatase 2A regulatory subunit B''epsilon">
    <location>
        <begin position="1"/>
        <end position="529"/>
    </location>
</feature>
<feature type="domain" description="EF-hand" evidence="2">
    <location>
        <begin position="381"/>
        <end position="416"/>
    </location>
</feature>
<feature type="region of interest" description="Disordered" evidence="3">
    <location>
        <begin position="60"/>
        <end position="110"/>
    </location>
</feature>
<feature type="region of interest" description="Disordered" evidence="3">
    <location>
        <begin position="507"/>
        <end position="529"/>
    </location>
</feature>
<feature type="compositionally biased region" description="Low complexity" evidence="3">
    <location>
        <begin position="71"/>
        <end position="109"/>
    </location>
</feature>
<feature type="compositionally biased region" description="Acidic residues" evidence="3">
    <location>
        <begin position="520"/>
        <end position="529"/>
    </location>
</feature>
<feature type="binding site" evidence="2">
    <location>
        <position position="394"/>
    </location>
    <ligand>
        <name>Ca(2+)</name>
        <dbReference type="ChEBI" id="CHEBI:29108"/>
    </ligand>
</feature>
<feature type="binding site" evidence="2">
    <location>
        <position position="396"/>
    </location>
    <ligand>
        <name>Ca(2+)</name>
        <dbReference type="ChEBI" id="CHEBI:29108"/>
    </ligand>
</feature>
<feature type="binding site" evidence="2">
    <location>
        <position position="398"/>
    </location>
    <ligand>
        <name>Ca(2+)</name>
        <dbReference type="ChEBI" id="CHEBI:29108"/>
    </ligand>
</feature>
<feature type="binding site" evidence="2">
    <location>
        <position position="405"/>
    </location>
    <ligand>
        <name>Ca(2+)</name>
        <dbReference type="ChEBI" id="CHEBI:29108"/>
    </ligand>
</feature>
<feature type="splice variant" id="VSP_046804" description="In isoform 2." evidence="4">
    <location>
        <begin position="1"/>
        <end position="140"/>
    </location>
</feature>
<keyword id="KW-0025">Alternative splicing</keyword>
<keyword id="KW-0106">Calcium</keyword>
<keyword id="KW-0479">Metal-binding</keyword>
<keyword id="KW-1185">Reference proteome</keyword>
<name>2AB2E_ARATH</name>
<comment type="function">
    <text evidence="1">Probable regulatory subunit of type 2A protein phosphatase.</text>
</comment>
<comment type="subunit">
    <text evidence="1">PP2A consists of a common heterodimeric core enzyme, composed of a 36 kDa catalytic subunit (subunit C) and a 65 kDa constant regulatory subunit (PR65 or subunit A), that associates with a variety of regulatory subunits. Proteins that associate with the core dimer include three families of regulatory subunits B (the R2/B/PR55/B55, R3/B''/PR72/PR130/PR59 and R5/B'/B56 families) and cell signaling molecules (By similarity).</text>
</comment>
<comment type="alternative products">
    <event type="alternative splicing"/>
    <isoform>
        <id>Q84JI6-1</id>
        <name>1</name>
        <sequence type="displayed"/>
    </isoform>
    <isoform>
        <id>Q84JI6-2</id>
        <name>2</name>
        <sequence type="described" ref="VSP_046804"/>
    </isoform>
</comment>
<comment type="sequence caution" evidence="4">
    <conflict type="erroneous gene model prediction">
        <sequence resource="EMBL-CDS" id="AAD10674"/>
    </conflict>
</comment>
<protein>
    <recommendedName>
        <fullName>Probable serine/threonine protein phosphatase 2A regulatory subunit B''epsilon</fullName>
        <shortName>AtB''epsilon</shortName>
    </recommendedName>
</protein>
<sequence>MDIDGVDDDLHILDPELLQLPGLSPSPLKPTSLIADDLFSQWLSLPETATLVKSLIDDAKSGTPTNKSKNLPSVFLSSSTPPLSPRSSSGSPRFSRQRTSPPSLHSPLRSLKEPKRQLIPQFYYQHGRPPAKELKEQCLSMVDQVFSNYIDGLHVDEFKSITKQVCKLPSFLSPALFRKIDPNCTDIVTRDAFIKYWIDGNMLTMDTASQIYNILRQQGCSYLRQADFKPVLDELLATHPGLEFLRTISEFQERYAETVIYRIFYYINRSGTGCLTLRELRRGNLIAAMQQLDEEDDINKIIRYFSYEHFYVIYCKFWELDGDHDCFIDKDNLIKYGNNALTYRIVDRIFSQIPRKFTSKVEGKMSYEDFVYFILAEEDKSSEPSLEYWFKCVDLDGNGVITSNEMQFFFEEQLHRMECITQEAVLFSDILCQIIDMIGPEKENCITLQDLKGSKLSANVFNILFNLNKFMAFETRDPFLIRQEREDPNLTEWDRFAQREYARLSMEEDVDEVSNGSADVWDEPLEPPF</sequence>
<proteinExistence type="evidence at transcript level"/>
<gene>
    <name type="primary">B''EPSILON</name>
    <name type="ordered locus">At1g03960</name>
    <name type="ORF">F21M11.11</name>
</gene>
<accession>Q84JI6</accession>
<accession>F4I2K5</accession>
<accession>Q9ZWB6</accession>